<keyword id="KW-0067">ATP-binding</keyword>
<keyword id="KW-0963">Cytoplasm</keyword>
<keyword id="KW-0275">Fatty acid biosynthesis</keyword>
<keyword id="KW-0276">Fatty acid metabolism</keyword>
<keyword id="KW-0444">Lipid biosynthesis</keyword>
<keyword id="KW-0443">Lipid metabolism</keyword>
<keyword id="KW-0479">Metal-binding</keyword>
<keyword id="KW-0547">Nucleotide-binding</keyword>
<keyword id="KW-0808">Transferase</keyword>
<keyword id="KW-0862">Zinc</keyword>
<keyword id="KW-0863">Zinc-finger</keyword>
<organism>
    <name type="scientific">Acinetobacter baumannii (strain ATCC 17978 / DSM 105126 / CIP 53.77 / LMG 1025 / NCDC KC755 / 5377)</name>
    <dbReference type="NCBI Taxonomy" id="400667"/>
    <lineage>
        <taxon>Bacteria</taxon>
        <taxon>Pseudomonadati</taxon>
        <taxon>Pseudomonadota</taxon>
        <taxon>Gammaproteobacteria</taxon>
        <taxon>Moraxellales</taxon>
        <taxon>Moraxellaceae</taxon>
        <taxon>Acinetobacter</taxon>
        <taxon>Acinetobacter calcoaceticus/baumannii complex</taxon>
    </lineage>
</organism>
<protein>
    <recommendedName>
        <fullName evidence="1">Acetyl-coenzyme A carboxylase carboxyl transferase subunit beta</fullName>
        <shortName evidence="1">ACCase subunit beta</shortName>
        <shortName evidence="1">Acetyl-CoA carboxylase carboxyltransferase subunit beta</shortName>
        <ecNumber evidence="1">2.1.3.15</ecNumber>
    </recommendedName>
</protein>
<feature type="chain" id="PRO_0000389657" description="Acetyl-coenzyme A carboxylase carboxyl transferase subunit beta">
    <location>
        <begin position="1"/>
        <end position="298"/>
    </location>
</feature>
<feature type="domain" description="CoA carboxyltransferase N-terminal" evidence="2">
    <location>
        <begin position="41"/>
        <end position="298"/>
    </location>
</feature>
<feature type="zinc finger region" description="C4-type" evidence="1">
    <location>
        <begin position="45"/>
        <end position="67"/>
    </location>
</feature>
<feature type="region of interest" description="Disordered" evidence="3">
    <location>
        <begin position="1"/>
        <end position="21"/>
    </location>
</feature>
<feature type="binding site" evidence="1">
    <location>
        <position position="45"/>
    </location>
    <ligand>
        <name>Zn(2+)</name>
        <dbReference type="ChEBI" id="CHEBI:29105"/>
    </ligand>
</feature>
<feature type="binding site" evidence="1">
    <location>
        <position position="48"/>
    </location>
    <ligand>
        <name>Zn(2+)</name>
        <dbReference type="ChEBI" id="CHEBI:29105"/>
    </ligand>
</feature>
<feature type="binding site" evidence="1">
    <location>
        <position position="64"/>
    </location>
    <ligand>
        <name>Zn(2+)</name>
        <dbReference type="ChEBI" id="CHEBI:29105"/>
    </ligand>
</feature>
<feature type="binding site" evidence="1">
    <location>
        <position position="67"/>
    </location>
    <ligand>
        <name>Zn(2+)</name>
        <dbReference type="ChEBI" id="CHEBI:29105"/>
    </ligand>
</feature>
<dbReference type="EC" id="2.1.3.15" evidence="1"/>
<dbReference type="EMBL" id="CP000521">
    <property type="protein sequence ID" value="ABO13275.2"/>
    <property type="molecule type" value="Genomic_DNA"/>
</dbReference>
<dbReference type="RefSeq" id="WP_001071168.1">
    <property type="nucleotide sequence ID" value="NZ_CP053098.1"/>
</dbReference>
<dbReference type="SMR" id="A3M8N1"/>
<dbReference type="GeneID" id="92895146"/>
<dbReference type="KEGG" id="acb:A1S_2869"/>
<dbReference type="HOGENOM" id="CLU_015486_1_0_6"/>
<dbReference type="UniPathway" id="UPA00655">
    <property type="reaction ID" value="UER00711"/>
</dbReference>
<dbReference type="GO" id="GO:0009329">
    <property type="term" value="C:acetate CoA-transferase complex"/>
    <property type="evidence" value="ECO:0007669"/>
    <property type="project" value="TreeGrafter"/>
</dbReference>
<dbReference type="GO" id="GO:0003989">
    <property type="term" value="F:acetyl-CoA carboxylase activity"/>
    <property type="evidence" value="ECO:0007669"/>
    <property type="project" value="InterPro"/>
</dbReference>
<dbReference type="GO" id="GO:0005524">
    <property type="term" value="F:ATP binding"/>
    <property type="evidence" value="ECO:0007669"/>
    <property type="project" value="UniProtKB-KW"/>
</dbReference>
<dbReference type="GO" id="GO:0016743">
    <property type="term" value="F:carboxyl- or carbamoyltransferase activity"/>
    <property type="evidence" value="ECO:0007669"/>
    <property type="project" value="UniProtKB-UniRule"/>
</dbReference>
<dbReference type="GO" id="GO:0008270">
    <property type="term" value="F:zinc ion binding"/>
    <property type="evidence" value="ECO:0007669"/>
    <property type="project" value="UniProtKB-UniRule"/>
</dbReference>
<dbReference type="GO" id="GO:0006633">
    <property type="term" value="P:fatty acid biosynthetic process"/>
    <property type="evidence" value="ECO:0007669"/>
    <property type="project" value="UniProtKB-KW"/>
</dbReference>
<dbReference type="GO" id="GO:2001295">
    <property type="term" value="P:malonyl-CoA biosynthetic process"/>
    <property type="evidence" value="ECO:0007669"/>
    <property type="project" value="UniProtKB-UniRule"/>
</dbReference>
<dbReference type="Gene3D" id="3.90.226.10">
    <property type="entry name" value="2-enoyl-CoA Hydratase, Chain A, domain 1"/>
    <property type="match status" value="1"/>
</dbReference>
<dbReference type="HAMAP" id="MF_01395">
    <property type="entry name" value="AcetylCoA_CT_beta"/>
    <property type="match status" value="1"/>
</dbReference>
<dbReference type="InterPro" id="IPR034733">
    <property type="entry name" value="AcCoA_carboxyl_beta"/>
</dbReference>
<dbReference type="InterPro" id="IPR000438">
    <property type="entry name" value="Acetyl_CoA_COase_Trfase_b_su"/>
</dbReference>
<dbReference type="InterPro" id="IPR029045">
    <property type="entry name" value="ClpP/crotonase-like_dom_sf"/>
</dbReference>
<dbReference type="InterPro" id="IPR011762">
    <property type="entry name" value="COA_CT_N"/>
</dbReference>
<dbReference type="NCBIfam" id="TIGR00515">
    <property type="entry name" value="accD"/>
    <property type="match status" value="1"/>
</dbReference>
<dbReference type="PANTHER" id="PTHR42995">
    <property type="entry name" value="ACETYL-COENZYME A CARBOXYLASE CARBOXYL TRANSFERASE SUBUNIT BETA, CHLOROPLASTIC"/>
    <property type="match status" value="1"/>
</dbReference>
<dbReference type="PANTHER" id="PTHR42995:SF5">
    <property type="entry name" value="ACETYL-COENZYME A CARBOXYLASE CARBOXYL TRANSFERASE SUBUNIT BETA, CHLOROPLASTIC"/>
    <property type="match status" value="1"/>
</dbReference>
<dbReference type="Pfam" id="PF01039">
    <property type="entry name" value="Carboxyl_trans"/>
    <property type="match status" value="1"/>
</dbReference>
<dbReference type="PRINTS" id="PR01070">
    <property type="entry name" value="ACCCTRFRASEB"/>
</dbReference>
<dbReference type="SUPFAM" id="SSF52096">
    <property type="entry name" value="ClpP/crotonase"/>
    <property type="match status" value="1"/>
</dbReference>
<dbReference type="PROSITE" id="PS50980">
    <property type="entry name" value="COA_CT_NTER"/>
    <property type="match status" value="1"/>
</dbReference>
<proteinExistence type="inferred from homology"/>
<accession>A3M8N1</accession>
<comment type="function">
    <text evidence="1">Component of the acetyl coenzyme A carboxylase (ACC) complex. Biotin carboxylase (BC) catalyzes the carboxylation of biotin on its carrier protein (BCCP) and then the CO(2) group is transferred by the transcarboxylase to acetyl-CoA to form malonyl-CoA.</text>
</comment>
<comment type="catalytic activity">
    <reaction evidence="1">
        <text>N(6)-carboxybiotinyl-L-lysyl-[protein] + acetyl-CoA = N(6)-biotinyl-L-lysyl-[protein] + malonyl-CoA</text>
        <dbReference type="Rhea" id="RHEA:54728"/>
        <dbReference type="Rhea" id="RHEA-COMP:10505"/>
        <dbReference type="Rhea" id="RHEA-COMP:10506"/>
        <dbReference type="ChEBI" id="CHEBI:57288"/>
        <dbReference type="ChEBI" id="CHEBI:57384"/>
        <dbReference type="ChEBI" id="CHEBI:83144"/>
        <dbReference type="ChEBI" id="CHEBI:83145"/>
        <dbReference type="EC" id="2.1.3.15"/>
    </reaction>
</comment>
<comment type="cofactor">
    <cofactor evidence="1">
        <name>Zn(2+)</name>
        <dbReference type="ChEBI" id="CHEBI:29105"/>
    </cofactor>
    <text evidence="1">Binds 1 zinc ion per subunit.</text>
</comment>
<comment type="pathway">
    <text evidence="1">Lipid metabolism; malonyl-CoA biosynthesis; malonyl-CoA from acetyl-CoA: step 1/1.</text>
</comment>
<comment type="subunit">
    <text evidence="1">Acetyl-CoA carboxylase is a heterohexamer composed of biotin carboxyl carrier protein (AccB), biotin carboxylase (AccC) and two subunits each of ACCase subunit alpha (AccA) and ACCase subunit beta (AccD).</text>
</comment>
<comment type="subcellular location">
    <subcellularLocation>
        <location evidence="1">Cytoplasm</location>
    </subcellularLocation>
</comment>
<comment type="similarity">
    <text evidence="1">Belongs to the AccD/PCCB family.</text>
</comment>
<sequence>MNQEVKSGKVLSPSTPWTQRPVPGIEVADEQQTLKATFTEPTIECPECHALVTRTAISFNAYVCPQCDEHLRMKARDRLNWFFDNVVAELGQEFSAKDPLKFVDSKPYPDRMREAQTKTGETEALIAMQGNLNGVDMIACAFEFDFMGGSMGTVVGDRFVKAAELAIEKRQPLICFAASGGARMQEGMLSLMQMARTSAAIQKLKDAGLPYIVVLTHPVYGGVTASLAMLGDIHIAEPKAMIGFAGKRVIEQTVRETLEEPFQRAEYLLDHGVVDQIVHRHALRDTVSRLVSKLMNLP</sequence>
<gene>
    <name evidence="1" type="primary">accD</name>
    <name type="ordered locus">A1S_2869</name>
</gene>
<evidence type="ECO:0000255" key="1">
    <source>
        <dbReference type="HAMAP-Rule" id="MF_01395"/>
    </source>
</evidence>
<evidence type="ECO:0000255" key="2">
    <source>
        <dbReference type="PROSITE-ProRule" id="PRU01136"/>
    </source>
</evidence>
<evidence type="ECO:0000256" key="3">
    <source>
        <dbReference type="SAM" id="MobiDB-lite"/>
    </source>
</evidence>
<name>ACCD_ACIBT</name>
<reference key="1">
    <citation type="journal article" date="2007" name="Genes Dev.">
        <title>New insights into Acinetobacter baumannii pathogenesis revealed by high-density pyrosequencing and transposon mutagenesis.</title>
        <authorList>
            <person name="Smith M.G."/>
            <person name="Gianoulis T.A."/>
            <person name="Pukatzki S."/>
            <person name="Mekalanos J.J."/>
            <person name="Ornston L.N."/>
            <person name="Gerstein M."/>
            <person name="Snyder M."/>
        </authorList>
    </citation>
    <scope>NUCLEOTIDE SEQUENCE [LARGE SCALE GENOMIC DNA]</scope>
    <source>
        <strain>ATCC 17978 / DSM 105126 / CIP 53.77 / LMG 1025 / NCDC KC755 / 5377</strain>
    </source>
</reference>